<proteinExistence type="inferred from homology"/>
<name>BPT_ALCBS</name>
<comment type="function">
    <text evidence="1">Functions in the N-end rule pathway of protein degradation where it conjugates Leu from its aminoacyl-tRNA to the N-termini of proteins containing an N-terminal aspartate or glutamate.</text>
</comment>
<comment type="catalytic activity">
    <reaction evidence="1">
        <text>N-terminal L-glutamyl-[protein] + L-leucyl-tRNA(Leu) = N-terminal L-leucyl-L-glutamyl-[protein] + tRNA(Leu) + H(+)</text>
        <dbReference type="Rhea" id="RHEA:50412"/>
        <dbReference type="Rhea" id="RHEA-COMP:9613"/>
        <dbReference type="Rhea" id="RHEA-COMP:9622"/>
        <dbReference type="Rhea" id="RHEA-COMP:12664"/>
        <dbReference type="Rhea" id="RHEA-COMP:12668"/>
        <dbReference type="ChEBI" id="CHEBI:15378"/>
        <dbReference type="ChEBI" id="CHEBI:64721"/>
        <dbReference type="ChEBI" id="CHEBI:78442"/>
        <dbReference type="ChEBI" id="CHEBI:78494"/>
        <dbReference type="ChEBI" id="CHEBI:133041"/>
        <dbReference type="EC" id="2.3.2.29"/>
    </reaction>
</comment>
<comment type="catalytic activity">
    <reaction evidence="1">
        <text>N-terminal L-aspartyl-[protein] + L-leucyl-tRNA(Leu) = N-terminal L-leucyl-L-aspartyl-[protein] + tRNA(Leu) + H(+)</text>
        <dbReference type="Rhea" id="RHEA:50420"/>
        <dbReference type="Rhea" id="RHEA-COMP:9613"/>
        <dbReference type="Rhea" id="RHEA-COMP:9622"/>
        <dbReference type="Rhea" id="RHEA-COMP:12669"/>
        <dbReference type="Rhea" id="RHEA-COMP:12674"/>
        <dbReference type="ChEBI" id="CHEBI:15378"/>
        <dbReference type="ChEBI" id="CHEBI:64720"/>
        <dbReference type="ChEBI" id="CHEBI:78442"/>
        <dbReference type="ChEBI" id="CHEBI:78494"/>
        <dbReference type="ChEBI" id="CHEBI:133042"/>
        <dbReference type="EC" id="2.3.2.29"/>
    </reaction>
</comment>
<comment type="subcellular location">
    <subcellularLocation>
        <location evidence="1">Cytoplasm</location>
    </subcellularLocation>
</comment>
<comment type="similarity">
    <text evidence="1">Belongs to the R-transferase family. Bpt subfamily.</text>
</comment>
<keyword id="KW-0012">Acyltransferase</keyword>
<keyword id="KW-0963">Cytoplasm</keyword>
<keyword id="KW-1185">Reference proteome</keyword>
<keyword id="KW-0808">Transferase</keyword>
<sequence length="242" mass="28231">MTDLSTLRFFRTPAHGCSYLEDRQASTLFVDPQAALSPELYSELSLLGFRRSGDYLYRPHCDSCNACIPARVRVDDFLPRRRHRRILKHNADLTVHREPARFSRELYTLYAAYINDRHGDGDMYPPSEEQFTNFLTCEWADTHFYGFREKGKLLAVAVTDQLNDGLSAVYTFFDPTLPERSLGVMALLWQIEQCQRLRLPYLYLGYWIRQCQKMSYKNQYQPLEILASGSWKEQSEPNDSGD</sequence>
<reference key="1">
    <citation type="journal article" date="2006" name="Nat. Biotechnol.">
        <title>Genome sequence of the ubiquitous hydrocarbon-degrading marine bacterium Alcanivorax borkumensis.</title>
        <authorList>
            <person name="Schneiker S."/>
            <person name="Martins dos Santos V.A.P."/>
            <person name="Bartels D."/>
            <person name="Bekel T."/>
            <person name="Brecht M."/>
            <person name="Buhrmester J."/>
            <person name="Chernikova T.N."/>
            <person name="Denaro R."/>
            <person name="Ferrer M."/>
            <person name="Gertler C."/>
            <person name="Goesmann A."/>
            <person name="Golyshina O.V."/>
            <person name="Kaminski F."/>
            <person name="Khachane A.N."/>
            <person name="Lang S."/>
            <person name="Linke B."/>
            <person name="McHardy A.C."/>
            <person name="Meyer F."/>
            <person name="Nechitaylo T."/>
            <person name="Puehler A."/>
            <person name="Regenhardt D."/>
            <person name="Rupp O."/>
            <person name="Sabirova J.S."/>
            <person name="Selbitschka W."/>
            <person name="Yakimov M.M."/>
            <person name="Timmis K.N."/>
            <person name="Vorhoelter F.-J."/>
            <person name="Weidner S."/>
            <person name="Kaiser O."/>
            <person name="Golyshin P.N."/>
        </authorList>
    </citation>
    <scope>NUCLEOTIDE SEQUENCE [LARGE SCALE GENOMIC DNA]</scope>
    <source>
        <strain>ATCC 700651 / DSM 11573 / NCIMB 13689 / SK2</strain>
    </source>
</reference>
<feature type="chain" id="PRO_0000263168" description="Aspartate/glutamate leucyltransferase">
    <location>
        <begin position="1"/>
        <end position="242"/>
    </location>
</feature>
<dbReference type="EC" id="2.3.2.29" evidence="1"/>
<dbReference type="EMBL" id="AM286690">
    <property type="protein sequence ID" value="CAL16735.1"/>
    <property type="molecule type" value="Genomic_DNA"/>
</dbReference>
<dbReference type="RefSeq" id="WP_011588569.1">
    <property type="nucleotide sequence ID" value="NC_008260.1"/>
</dbReference>
<dbReference type="SMR" id="Q0VQ13"/>
<dbReference type="STRING" id="393595.ABO_1287"/>
<dbReference type="KEGG" id="abo:ABO_1287"/>
<dbReference type="eggNOG" id="COG2935">
    <property type="taxonomic scope" value="Bacteria"/>
</dbReference>
<dbReference type="HOGENOM" id="CLU_077607_0_0_6"/>
<dbReference type="OrthoDB" id="9782022at2"/>
<dbReference type="Proteomes" id="UP000008871">
    <property type="component" value="Chromosome"/>
</dbReference>
<dbReference type="GO" id="GO:0005737">
    <property type="term" value="C:cytoplasm"/>
    <property type="evidence" value="ECO:0007669"/>
    <property type="project" value="UniProtKB-SubCell"/>
</dbReference>
<dbReference type="GO" id="GO:0004057">
    <property type="term" value="F:arginyl-tRNA--protein transferase activity"/>
    <property type="evidence" value="ECO:0007669"/>
    <property type="project" value="InterPro"/>
</dbReference>
<dbReference type="GO" id="GO:0008914">
    <property type="term" value="F:leucyl-tRNA--protein transferase activity"/>
    <property type="evidence" value="ECO:0007669"/>
    <property type="project" value="UniProtKB-UniRule"/>
</dbReference>
<dbReference type="GO" id="GO:0071596">
    <property type="term" value="P:ubiquitin-dependent protein catabolic process via the N-end rule pathway"/>
    <property type="evidence" value="ECO:0007669"/>
    <property type="project" value="InterPro"/>
</dbReference>
<dbReference type="HAMAP" id="MF_00689">
    <property type="entry name" value="Bpt"/>
    <property type="match status" value="1"/>
</dbReference>
<dbReference type="InterPro" id="IPR016181">
    <property type="entry name" value="Acyl_CoA_acyltransferase"/>
</dbReference>
<dbReference type="InterPro" id="IPR017138">
    <property type="entry name" value="Asp_Glu_LeuTrfase"/>
</dbReference>
<dbReference type="InterPro" id="IPR030700">
    <property type="entry name" value="N-end_Aminoacyl_Trfase"/>
</dbReference>
<dbReference type="InterPro" id="IPR007472">
    <property type="entry name" value="N-end_Aminoacyl_Trfase_C"/>
</dbReference>
<dbReference type="InterPro" id="IPR007471">
    <property type="entry name" value="N-end_Aminoacyl_Trfase_N"/>
</dbReference>
<dbReference type="NCBIfam" id="NF002341">
    <property type="entry name" value="PRK01305.1-1"/>
    <property type="match status" value="1"/>
</dbReference>
<dbReference type="NCBIfam" id="NF002342">
    <property type="entry name" value="PRK01305.1-3"/>
    <property type="match status" value="1"/>
</dbReference>
<dbReference type="NCBIfam" id="NF002345">
    <property type="entry name" value="PRK01305.2-2"/>
    <property type="match status" value="1"/>
</dbReference>
<dbReference type="NCBIfam" id="NF002346">
    <property type="entry name" value="PRK01305.2-3"/>
    <property type="match status" value="1"/>
</dbReference>
<dbReference type="PANTHER" id="PTHR21367">
    <property type="entry name" value="ARGININE-TRNA-PROTEIN TRANSFERASE 1"/>
    <property type="match status" value="1"/>
</dbReference>
<dbReference type="PANTHER" id="PTHR21367:SF1">
    <property type="entry name" value="ARGINYL-TRNA--PROTEIN TRANSFERASE 1"/>
    <property type="match status" value="1"/>
</dbReference>
<dbReference type="Pfam" id="PF04377">
    <property type="entry name" value="ATE_C"/>
    <property type="match status" value="1"/>
</dbReference>
<dbReference type="Pfam" id="PF04376">
    <property type="entry name" value="ATE_N"/>
    <property type="match status" value="1"/>
</dbReference>
<dbReference type="PIRSF" id="PIRSF037208">
    <property type="entry name" value="ATE_pro_prd"/>
    <property type="match status" value="1"/>
</dbReference>
<dbReference type="SUPFAM" id="SSF55729">
    <property type="entry name" value="Acyl-CoA N-acyltransferases (Nat)"/>
    <property type="match status" value="1"/>
</dbReference>
<evidence type="ECO:0000255" key="1">
    <source>
        <dbReference type="HAMAP-Rule" id="MF_00689"/>
    </source>
</evidence>
<organism>
    <name type="scientific">Alcanivorax borkumensis (strain ATCC 700651 / DSM 11573 / NCIMB 13689 / SK2)</name>
    <dbReference type="NCBI Taxonomy" id="393595"/>
    <lineage>
        <taxon>Bacteria</taxon>
        <taxon>Pseudomonadati</taxon>
        <taxon>Pseudomonadota</taxon>
        <taxon>Gammaproteobacteria</taxon>
        <taxon>Oceanospirillales</taxon>
        <taxon>Alcanivoracaceae</taxon>
        <taxon>Alcanivorax</taxon>
    </lineage>
</organism>
<protein>
    <recommendedName>
        <fullName evidence="1">Aspartate/glutamate leucyltransferase</fullName>
        <ecNumber evidence="1">2.3.2.29</ecNumber>
    </recommendedName>
</protein>
<gene>
    <name evidence="1" type="primary">bpt</name>
    <name type="ordered locus">ABO_1287</name>
</gene>
<accession>Q0VQ13</accession>